<comment type="function">
    <text evidence="1">One of the primary rRNA binding proteins, it binds directly to 16S rRNA where it helps nucleate assembly of the platform of the 30S subunit by binding and bridging several RNA helices of the 16S rRNA.</text>
</comment>
<comment type="function">
    <text evidence="1">Forms an intersubunit bridge (bridge B4) with the 23S rRNA of the 50S subunit in the ribosome.</text>
</comment>
<comment type="subunit">
    <text evidence="1">Part of the 30S ribosomal subunit. Forms a bridge to the 50S subunit in the 70S ribosome, contacting the 23S rRNA.</text>
</comment>
<comment type="similarity">
    <text evidence="1">Belongs to the universal ribosomal protein uS15 family.</text>
</comment>
<sequence length="89" mass="10485">MALTAEEKQEIIAKYATHEGDTGSPEVQVALLSKRIADLTEHLKEHKHDHHSRRGMQLMIGDRRRLLDYLKRVDINRYRSLIERLGLRR</sequence>
<keyword id="KW-1185">Reference proteome</keyword>
<keyword id="KW-0687">Ribonucleoprotein</keyword>
<keyword id="KW-0689">Ribosomal protein</keyword>
<keyword id="KW-0694">RNA-binding</keyword>
<keyword id="KW-0699">rRNA-binding</keyword>
<reference key="1">
    <citation type="journal article" date="2002" name="Proc. Natl. Acad. Sci. U.S.A.">
        <title>The genome sequence of Bifidobacterium longum reflects its adaptation to the human gastrointestinal tract.</title>
        <authorList>
            <person name="Schell M.A."/>
            <person name="Karmirantzou M."/>
            <person name="Snel B."/>
            <person name="Vilanova D."/>
            <person name="Berger B."/>
            <person name="Pessi G."/>
            <person name="Zwahlen M.-C."/>
            <person name="Desiere F."/>
            <person name="Bork P."/>
            <person name="Delley M."/>
            <person name="Pridmore R.D."/>
            <person name="Arigoni F."/>
        </authorList>
    </citation>
    <scope>NUCLEOTIDE SEQUENCE [LARGE SCALE GENOMIC DNA]</scope>
    <source>
        <strain>NCC 2705</strain>
    </source>
</reference>
<name>RS15_BIFLO</name>
<organism>
    <name type="scientific">Bifidobacterium longum (strain NCC 2705)</name>
    <dbReference type="NCBI Taxonomy" id="206672"/>
    <lineage>
        <taxon>Bacteria</taxon>
        <taxon>Bacillati</taxon>
        <taxon>Actinomycetota</taxon>
        <taxon>Actinomycetes</taxon>
        <taxon>Bifidobacteriales</taxon>
        <taxon>Bifidobacteriaceae</taxon>
        <taxon>Bifidobacterium</taxon>
    </lineage>
</organism>
<gene>
    <name evidence="1" type="primary">rpsO</name>
    <name type="ordered locus">BL1545.1</name>
</gene>
<protein>
    <recommendedName>
        <fullName evidence="1">Small ribosomal subunit protein uS15</fullName>
    </recommendedName>
    <alternativeName>
        <fullName evidence="2">30S ribosomal protein S15</fullName>
    </alternativeName>
</protein>
<feature type="chain" id="PRO_0000115389" description="Small ribosomal subunit protein uS15">
    <location>
        <begin position="1"/>
        <end position="89"/>
    </location>
</feature>
<evidence type="ECO:0000255" key="1">
    <source>
        <dbReference type="HAMAP-Rule" id="MF_01343"/>
    </source>
</evidence>
<evidence type="ECO:0000305" key="2"/>
<proteinExistence type="inferred from homology"/>
<dbReference type="EMBL" id="AE014295">
    <property type="protein sequence ID" value="AAN25337.1"/>
    <property type="molecule type" value="Genomic_DNA"/>
</dbReference>
<dbReference type="RefSeq" id="NP_696701.1">
    <property type="nucleotide sequence ID" value="NC_004307.2"/>
</dbReference>
<dbReference type="RefSeq" id="WP_007052997.1">
    <property type="nucleotide sequence ID" value="NC_004307.2"/>
</dbReference>
<dbReference type="SMR" id="Q8G448"/>
<dbReference type="STRING" id="206672.BL1545a"/>
<dbReference type="EnsemblBacteria" id="AAN25337">
    <property type="protein sequence ID" value="AAN25337"/>
    <property type="gene ID" value="BL1545a"/>
</dbReference>
<dbReference type="GeneID" id="69578936"/>
<dbReference type="KEGG" id="blo:BL1545a"/>
<dbReference type="PATRIC" id="fig|206672.9.peg.1598"/>
<dbReference type="HOGENOM" id="CLU_148518_0_0_11"/>
<dbReference type="OrthoDB" id="9799262at2"/>
<dbReference type="PhylomeDB" id="Q8G448"/>
<dbReference type="Proteomes" id="UP000000439">
    <property type="component" value="Chromosome"/>
</dbReference>
<dbReference type="GO" id="GO:0022627">
    <property type="term" value="C:cytosolic small ribosomal subunit"/>
    <property type="evidence" value="ECO:0007669"/>
    <property type="project" value="TreeGrafter"/>
</dbReference>
<dbReference type="GO" id="GO:0019843">
    <property type="term" value="F:rRNA binding"/>
    <property type="evidence" value="ECO:0007669"/>
    <property type="project" value="UniProtKB-UniRule"/>
</dbReference>
<dbReference type="GO" id="GO:0003735">
    <property type="term" value="F:structural constituent of ribosome"/>
    <property type="evidence" value="ECO:0007669"/>
    <property type="project" value="InterPro"/>
</dbReference>
<dbReference type="GO" id="GO:0006412">
    <property type="term" value="P:translation"/>
    <property type="evidence" value="ECO:0007669"/>
    <property type="project" value="UniProtKB-UniRule"/>
</dbReference>
<dbReference type="CDD" id="cd00353">
    <property type="entry name" value="Ribosomal_S15p_S13e"/>
    <property type="match status" value="1"/>
</dbReference>
<dbReference type="FunFam" id="1.10.287.10:FF:000002">
    <property type="entry name" value="30S ribosomal protein S15"/>
    <property type="match status" value="1"/>
</dbReference>
<dbReference type="Gene3D" id="6.10.250.3130">
    <property type="match status" value="1"/>
</dbReference>
<dbReference type="Gene3D" id="1.10.287.10">
    <property type="entry name" value="S15/NS1, RNA-binding"/>
    <property type="match status" value="1"/>
</dbReference>
<dbReference type="HAMAP" id="MF_01343_B">
    <property type="entry name" value="Ribosomal_uS15_B"/>
    <property type="match status" value="1"/>
</dbReference>
<dbReference type="InterPro" id="IPR000589">
    <property type="entry name" value="Ribosomal_uS15"/>
</dbReference>
<dbReference type="InterPro" id="IPR005290">
    <property type="entry name" value="Ribosomal_uS15_bac-type"/>
</dbReference>
<dbReference type="InterPro" id="IPR009068">
    <property type="entry name" value="uS15_NS1_RNA-bd_sf"/>
</dbReference>
<dbReference type="NCBIfam" id="TIGR00952">
    <property type="entry name" value="S15_bact"/>
    <property type="match status" value="1"/>
</dbReference>
<dbReference type="PANTHER" id="PTHR23321">
    <property type="entry name" value="RIBOSOMAL PROTEIN S15, BACTERIAL AND ORGANELLAR"/>
    <property type="match status" value="1"/>
</dbReference>
<dbReference type="PANTHER" id="PTHR23321:SF26">
    <property type="entry name" value="SMALL RIBOSOMAL SUBUNIT PROTEIN US15M"/>
    <property type="match status" value="1"/>
</dbReference>
<dbReference type="Pfam" id="PF00312">
    <property type="entry name" value="Ribosomal_S15"/>
    <property type="match status" value="1"/>
</dbReference>
<dbReference type="SMART" id="SM01387">
    <property type="entry name" value="Ribosomal_S15"/>
    <property type="match status" value="1"/>
</dbReference>
<dbReference type="SUPFAM" id="SSF47060">
    <property type="entry name" value="S15/NS1 RNA-binding domain"/>
    <property type="match status" value="1"/>
</dbReference>
<accession>Q8G448</accession>